<organism>
    <name type="scientific">Salmonella arizonae (strain ATCC BAA-731 / CDC346-86 / RSK2980)</name>
    <dbReference type="NCBI Taxonomy" id="41514"/>
    <lineage>
        <taxon>Bacteria</taxon>
        <taxon>Pseudomonadati</taxon>
        <taxon>Pseudomonadota</taxon>
        <taxon>Gammaproteobacteria</taxon>
        <taxon>Enterobacterales</taxon>
        <taxon>Enterobacteriaceae</taxon>
        <taxon>Salmonella</taxon>
    </lineage>
</organism>
<reference key="1">
    <citation type="submission" date="2007-11" db="EMBL/GenBank/DDBJ databases">
        <authorList>
            <consortium name="The Salmonella enterica serovar Arizonae Genome Sequencing Project"/>
            <person name="McClelland M."/>
            <person name="Sanderson E.K."/>
            <person name="Porwollik S."/>
            <person name="Spieth J."/>
            <person name="Clifton W.S."/>
            <person name="Fulton R."/>
            <person name="Chunyan W."/>
            <person name="Wollam A."/>
            <person name="Shah N."/>
            <person name="Pepin K."/>
            <person name="Bhonagiri V."/>
            <person name="Nash W."/>
            <person name="Johnson M."/>
            <person name="Thiruvilangam P."/>
            <person name="Wilson R."/>
        </authorList>
    </citation>
    <scope>NUCLEOTIDE SEQUENCE [LARGE SCALE GENOMIC DNA]</scope>
    <source>
        <strain>ATCC BAA-731 / CDC346-86 / RSK2980</strain>
    </source>
</reference>
<evidence type="ECO:0000255" key="1">
    <source>
        <dbReference type="HAMAP-Rule" id="MF_00368"/>
    </source>
</evidence>
<evidence type="ECO:0000305" key="2"/>
<feature type="chain" id="PRO_1000079808" description="Large ribosomal subunit protein bL12">
    <location>
        <begin position="1"/>
        <end position="123"/>
    </location>
</feature>
<sequence length="123" mass="12399">MSITKDQIIEAVAAMSVMDVVELITAMEEKFGVSAAAAVAVAGAGAAAEAAEEKTEFDVILKAAGANKVAVIKAVRGATGLGLKEAKDLVESAPAALKEGVSKDDAEALKKSLEEAGAEVEVK</sequence>
<proteinExistence type="inferred from homology"/>
<protein>
    <recommendedName>
        <fullName evidence="1">Large ribosomal subunit protein bL12</fullName>
    </recommendedName>
    <alternativeName>
        <fullName evidence="2">50S ribosomal protein L7/L12</fullName>
    </alternativeName>
</protein>
<comment type="function">
    <text evidence="1">Forms part of the ribosomal stalk which helps the ribosome interact with GTP-bound translation factors. Is thus essential for accurate translation.</text>
</comment>
<comment type="subunit">
    <text evidence="1">Homodimer. Part of the ribosomal stalk of the 50S ribosomal subunit. Forms a multimeric L10(L12)X complex, where L10 forms an elongated spine to which 2 to 4 L12 dimers bind in a sequential fashion. Binds GTP-bound translation factors.</text>
</comment>
<comment type="similarity">
    <text evidence="1">Belongs to the bacterial ribosomal protein bL12 family.</text>
</comment>
<gene>
    <name evidence="1" type="primary">rplL</name>
    <name type="ordered locus">SARI_03511</name>
</gene>
<name>RL7_SALAR</name>
<dbReference type="EMBL" id="CP000880">
    <property type="protein sequence ID" value="ABX23336.1"/>
    <property type="molecule type" value="Genomic_DNA"/>
</dbReference>
<dbReference type="SMR" id="A9MHF3"/>
<dbReference type="STRING" id="41514.SARI_03511"/>
<dbReference type="KEGG" id="ses:SARI_03511"/>
<dbReference type="HOGENOM" id="CLU_086499_3_2_6"/>
<dbReference type="Proteomes" id="UP000002084">
    <property type="component" value="Chromosome"/>
</dbReference>
<dbReference type="GO" id="GO:0022625">
    <property type="term" value="C:cytosolic large ribosomal subunit"/>
    <property type="evidence" value="ECO:0007669"/>
    <property type="project" value="TreeGrafter"/>
</dbReference>
<dbReference type="GO" id="GO:0003729">
    <property type="term" value="F:mRNA binding"/>
    <property type="evidence" value="ECO:0007669"/>
    <property type="project" value="TreeGrafter"/>
</dbReference>
<dbReference type="GO" id="GO:0003735">
    <property type="term" value="F:structural constituent of ribosome"/>
    <property type="evidence" value="ECO:0007669"/>
    <property type="project" value="InterPro"/>
</dbReference>
<dbReference type="GO" id="GO:0006412">
    <property type="term" value="P:translation"/>
    <property type="evidence" value="ECO:0007669"/>
    <property type="project" value="UniProtKB-UniRule"/>
</dbReference>
<dbReference type="CDD" id="cd00387">
    <property type="entry name" value="Ribosomal_L7_L12"/>
    <property type="match status" value="1"/>
</dbReference>
<dbReference type="FunFam" id="1.20.5.710:FF:000001">
    <property type="entry name" value="50S ribosomal protein L7/L12"/>
    <property type="match status" value="1"/>
</dbReference>
<dbReference type="FunFam" id="3.30.1390.10:FF:000001">
    <property type="entry name" value="50S ribosomal protein L7/L12"/>
    <property type="match status" value="1"/>
</dbReference>
<dbReference type="Gene3D" id="3.30.1390.10">
    <property type="match status" value="1"/>
</dbReference>
<dbReference type="Gene3D" id="1.20.5.710">
    <property type="entry name" value="Single helix bin"/>
    <property type="match status" value="1"/>
</dbReference>
<dbReference type="HAMAP" id="MF_00368">
    <property type="entry name" value="Ribosomal_bL12"/>
    <property type="match status" value="1"/>
</dbReference>
<dbReference type="InterPro" id="IPR000206">
    <property type="entry name" value="Ribosomal_bL12"/>
</dbReference>
<dbReference type="InterPro" id="IPR013823">
    <property type="entry name" value="Ribosomal_bL12_C"/>
</dbReference>
<dbReference type="InterPro" id="IPR014719">
    <property type="entry name" value="Ribosomal_bL12_C/ClpS-like"/>
</dbReference>
<dbReference type="InterPro" id="IPR008932">
    <property type="entry name" value="Ribosomal_bL12_oligo"/>
</dbReference>
<dbReference type="InterPro" id="IPR036235">
    <property type="entry name" value="Ribosomal_bL12_oligo_N_sf"/>
</dbReference>
<dbReference type="NCBIfam" id="TIGR00855">
    <property type="entry name" value="L12"/>
    <property type="match status" value="1"/>
</dbReference>
<dbReference type="PANTHER" id="PTHR45987">
    <property type="entry name" value="39S RIBOSOMAL PROTEIN L12"/>
    <property type="match status" value="1"/>
</dbReference>
<dbReference type="PANTHER" id="PTHR45987:SF4">
    <property type="entry name" value="LARGE RIBOSOMAL SUBUNIT PROTEIN BL12M"/>
    <property type="match status" value="1"/>
</dbReference>
<dbReference type="Pfam" id="PF00542">
    <property type="entry name" value="Ribosomal_L12"/>
    <property type="match status" value="1"/>
</dbReference>
<dbReference type="Pfam" id="PF16320">
    <property type="entry name" value="Ribosomal_L12_N"/>
    <property type="match status" value="1"/>
</dbReference>
<dbReference type="SUPFAM" id="SSF54736">
    <property type="entry name" value="ClpS-like"/>
    <property type="match status" value="1"/>
</dbReference>
<dbReference type="SUPFAM" id="SSF48300">
    <property type="entry name" value="Ribosomal protein L7/12, oligomerisation (N-terminal) domain"/>
    <property type="match status" value="1"/>
</dbReference>
<keyword id="KW-1185">Reference proteome</keyword>
<keyword id="KW-0687">Ribonucleoprotein</keyword>
<keyword id="KW-0689">Ribosomal protein</keyword>
<accession>A9MHF3</accession>